<gene>
    <name evidence="1" type="primary">acpP</name>
    <name type="ordered locus">Exig_1907</name>
</gene>
<sequence>MTKEQILVDVQEAIAEKLGKEQSEITLDKSFKDDLGADSLEVMELVMDLEDKFEITIEDDQAENLKTVGDVVSYIETQV</sequence>
<reference key="1">
    <citation type="submission" date="2008-04" db="EMBL/GenBank/DDBJ databases">
        <title>Complete sequence of chromosome of Exiguobacterium sibiricum 255-15.</title>
        <authorList>
            <consortium name="US DOE Joint Genome Institute"/>
            <person name="Copeland A."/>
            <person name="Lucas S."/>
            <person name="Lapidus A."/>
            <person name="Glavina del Rio T."/>
            <person name="Dalin E."/>
            <person name="Tice H."/>
            <person name="Bruce D."/>
            <person name="Goodwin L."/>
            <person name="Pitluck S."/>
            <person name="Kiss H."/>
            <person name="Chertkov O."/>
            <person name="Monk C."/>
            <person name="Brettin T."/>
            <person name="Detter J.C."/>
            <person name="Han C."/>
            <person name="Kuske C.R."/>
            <person name="Schmutz J."/>
            <person name="Larimer F."/>
            <person name="Land M."/>
            <person name="Hauser L."/>
            <person name="Kyrpides N."/>
            <person name="Mikhailova N."/>
            <person name="Vishnivetskaya T."/>
            <person name="Rodrigues D.F."/>
            <person name="Gilichinsky D."/>
            <person name="Tiedje J."/>
            <person name="Richardson P."/>
        </authorList>
    </citation>
    <scope>NUCLEOTIDE SEQUENCE [LARGE SCALE GENOMIC DNA]</scope>
    <source>
        <strain>DSM 17290 / CCUG 55495 / CIP 109462 / JCM 13490 / 255-15</strain>
    </source>
</reference>
<dbReference type="EMBL" id="CP001022">
    <property type="protein sequence ID" value="ACB61359.1"/>
    <property type="molecule type" value="Genomic_DNA"/>
</dbReference>
<dbReference type="RefSeq" id="WP_012370777.1">
    <property type="nucleotide sequence ID" value="NC_010556.1"/>
</dbReference>
<dbReference type="SMR" id="B1YIN3"/>
<dbReference type="STRING" id="262543.Exig_1907"/>
<dbReference type="KEGG" id="esi:Exig_1907"/>
<dbReference type="eggNOG" id="COG0236">
    <property type="taxonomic scope" value="Bacteria"/>
</dbReference>
<dbReference type="HOGENOM" id="CLU_108696_5_1_9"/>
<dbReference type="OrthoDB" id="9804551at2"/>
<dbReference type="UniPathway" id="UPA00094"/>
<dbReference type="Proteomes" id="UP000001681">
    <property type="component" value="Chromosome"/>
</dbReference>
<dbReference type="GO" id="GO:0005829">
    <property type="term" value="C:cytosol"/>
    <property type="evidence" value="ECO:0007669"/>
    <property type="project" value="TreeGrafter"/>
</dbReference>
<dbReference type="GO" id="GO:0016020">
    <property type="term" value="C:membrane"/>
    <property type="evidence" value="ECO:0007669"/>
    <property type="project" value="GOC"/>
</dbReference>
<dbReference type="GO" id="GO:0000035">
    <property type="term" value="F:acyl binding"/>
    <property type="evidence" value="ECO:0007669"/>
    <property type="project" value="TreeGrafter"/>
</dbReference>
<dbReference type="GO" id="GO:0000036">
    <property type="term" value="F:acyl carrier activity"/>
    <property type="evidence" value="ECO:0007669"/>
    <property type="project" value="UniProtKB-UniRule"/>
</dbReference>
<dbReference type="GO" id="GO:0009245">
    <property type="term" value="P:lipid A biosynthetic process"/>
    <property type="evidence" value="ECO:0007669"/>
    <property type="project" value="TreeGrafter"/>
</dbReference>
<dbReference type="Gene3D" id="1.10.1200.10">
    <property type="entry name" value="ACP-like"/>
    <property type="match status" value="1"/>
</dbReference>
<dbReference type="HAMAP" id="MF_01217">
    <property type="entry name" value="Acyl_carrier"/>
    <property type="match status" value="1"/>
</dbReference>
<dbReference type="InterPro" id="IPR003231">
    <property type="entry name" value="ACP"/>
</dbReference>
<dbReference type="InterPro" id="IPR036736">
    <property type="entry name" value="ACP-like_sf"/>
</dbReference>
<dbReference type="InterPro" id="IPR009081">
    <property type="entry name" value="PP-bd_ACP"/>
</dbReference>
<dbReference type="InterPro" id="IPR006162">
    <property type="entry name" value="Ppantetheine_attach_site"/>
</dbReference>
<dbReference type="NCBIfam" id="TIGR00517">
    <property type="entry name" value="acyl_carrier"/>
    <property type="match status" value="1"/>
</dbReference>
<dbReference type="NCBIfam" id="NF002148">
    <property type="entry name" value="PRK00982.1-2"/>
    <property type="match status" value="1"/>
</dbReference>
<dbReference type="NCBIfam" id="NF002150">
    <property type="entry name" value="PRK00982.1-4"/>
    <property type="match status" value="1"/>
</dbReference>
<dbReference type="PANTHER" id="PTHR20863">
    <property type="entry name" value="ACYL CARRIER PROTEIN"/>
    <property type="match status" value="1"/>
</dbReference>
<dbReference type="PANTHER" id="PTHR20863:SF76">
    <property type="entry name" value="CARRIER DOMAIN-CONTAINING PROTEIN"/>
    <property type="match status" value="1"/>
</dbReference>
<dbReference type="Pfam" id="PF00550">
    <property type="entry name" value="PP-binding"/>
    <property type="match status" value="1"/>
</dbReference>
<dbReference type="SUPFAM" id="SSF47336">
    <property type="entry name" value="ACP-like"/>
    <property type="match status" value="1"/>
</dbReference>
<dbReference type="PROSITE" id="PS50075">
    <property type="entry name" value="CARRIER"/>
    <property type="match status" value="1"/>
</dbReference>
<dbReference type="PROSITE" id="PS00012">
    <property type="entry name" value="PHOSPHOPANTETHEINE"/>
    <property type="match status" value="1"/>
</dbReference>
<keyword id="KW-0963">Cytoplasm</keyword>
<keyword id="KW-0275">Fatty acid biosynthesis</keyword>
<keyword id="KW-0276">Fatty acid metabolism</keyword>
<keyword id="KW-0444">Lipid biosynthesis</keyword>
<keyword id="KW-0443">Lipid metabolism</keyword>
<keyword id="KW-0596">Phosphopantetheine</keyword>
<keyword id="KW-0597">Phosphoprotein</keyword>
<keyword id="KW-1185">Reference proteome</keyword>
<protein>
    <recommendedName>
        <fullName evidence="1">Acyl carrier protein</fullName>
        <shortName evidence="1">ACP</shortName>
    </recommendedName>
</protein>
<proteinExistence type="inferred from homology"/>
<accession>B1YIN3</accession>
<feature type="chain" id="PRO_1000139028" description="Acyl carrier protein">
    <location>
        <begin position="1"/>
        <end position="79"/>
    </location>
</feature>
<feature type="domain" description="Carrier" evidence="2">
    <location>
        <begin position="1"/>
        <end position="79"/>
    </location>
</feature>
<feature type="modified residue" description="O-(pantetheine 4'-phosphoryl)serine" evidence="2">
    <location>
        <position position="39"/>
    </location>
</feature>
<comment type="function">
    <text evidence="1">Carrier of the growing fatty acid chain in fatty acid biosynthesis.</text>
</comment>
<comment type="pathway">
    <text evidence="1">Lipid metabolism; fatty acid biosynthesis.</text>
</comment>
<comment type="subcellular location">
    <subcellularLocation>
        <location evidence="1">Cytoplasm</location>
    </subcellularLocation>
</comment>
<comment type="PTM">
    <text evidence="1">4'-phosphopantetheine is transferred from CoA to a specific serine of apo-ACP by AcpS. This modification is essential for activity because fatty acids are bound in thioester linkage to the sulfhydryl of the prosthetic group.</text>
</comment>
<comment type="similarity">
    <text evidence="1">Belongs to the acyl carrier protein (ACP) family.</text>
</comment>
<organism>
    <name type="scientific">Exiguobacterium sibiricum (strain DSM 17290 / CCUG 55495 / CIP 109462 / JCM 13490 / 255-15)</name>
    <dbReference type="NCBI Taxonomy" id="262543"/>
    <lineage>
        <taxon>Bacteria</taxon>
        <taxon>Bacillati</taxon>
        <taxon>Bacillota</taxon>
        <taxon>Bacilli</taxon>
        <taxon>Bacillales</taxon>
        <taxon>Bacillales Family XII. Incertae Sedis</taxon>
        <taxon>Exiguobacterium</taxon>
    </lineage>
</organism>
<name>ACP_EXIS2</name>
<evidence type="ECO:0000255" key="1">
    <source>
        <dbReference type="HAMAP-Rule" id="MF_01217"/>
    </source>
</evidence>
<evidence type="ECO:0000255" key="2">
    <source>
        <dbReference type="PROSITE-ProRule" id="PRU00258"/>
    </source>
</evidence>